<comment type="function">
    <text evidence="1">Component of the dark-operative protochlorophyllide reductase (DPOR) that uses Mg-ATP and reduced ferredoxin to reduce ring D of protochlorophyllide (Pchlide) to form chlorophyllide a (Chlide). This reaction is light-independent. The L component serves as a unique electron donor to the NB-component of the complex, and binds Mg-ATP.</text>
</comment>
<comment type="catalytic activity">
    <reaction evidence="1">
        <text>chlorophyllide a + oxidized 2[4Fe-4S]-[ferredoxin] + 2 ADP + 2 phosphate = protochlorophyllide a + reduced 2[4Fe-4S]-[ferredoxin] + 2 ATP + 2 H2O</text>
        <dbReference type="Rhea" id="RHEA:28202"/>
        <dbReference type="Rhea" id="RHEA-COMP:10002"/>
        <dbReference type="Rhea" id="RHEA-COMP:10004"/>
        <dbReference type="ChEBI" id="CHEBI:15377"/>
        <dbReference type="ChEBI" id="CHEBI:30616"/>
        <dbReference type="ChEBI" id="CHEBI:33722"/>
        <dbReference type="ChEBI" id="CHEBI:33723"/>
        <dbReference type="ChEBI" id="CHEBI:43474"/>
        <dbReference type="ChEBI" id="CHEBI:83348"/>
        <dbReference type="ChEBI" id="CHEBI:83350"/>
        <dbReference type="ChEBI" id="CHEBI:456216"/>
        <dbReference type="EC" id="1.3.7.7"/>
    </reaction>
</comment>
<comment type="cofactor">
    <cofactor evidence="1">
        <name>[4Fe-4S] cluster</name>
        <dbReference type="ChEBI" id="CHEBI:49883"/>
    </cofactor>
    <text evidence="1">Binds 1 [4Fe-4S] cluster per dimer.</text>
</comment>
<comment type="pathway">
    <text evidence="1">Porphyrin-containing compound metabolism; chlorophyll biosynthesis (light-independent).</text>
</comment>
<comment type="subunit">
    <text evidence="1">Homodimer. Protochlorophyllide reductase is composed of three subunits; ChlL, ChlN and ChlB.</text>
</comment>
<comment type="subcellular location">
    <subcellularLocation>
        <location>Plastid</location>
        <location>Chloroplast</location>
    </subcellularLocation>
</comment>
<comment type="similarity">
    <text evidence="1">Belongs to the NifH/BchL/ChlL family.</text>
</comment>
<sequence length="294" mass="32008">MKLAVYGKGGIGKSTTSCNISIALARRGKKVLQIGCDPKHDSTFTLTGFLIPTIIDTLQSKDYHYEDVWPEDVIYQGYGGVDCVEAGGPPAGAGCGGYVVGETVKLLKELNAFYEYDVILFDVLGDVVCGGFAAPLNYADYCIIVTDNGFDALFAANRIVASVREKARTHPLRVAGLVGNRTDARDLIDKYVEVCPMPVLEVLPLIEDIRISRVKGQTLFEIAETQTAVSYVCDYFLNIADQLLSQPEGVVPNELGDRELFSLLSDFYLNPTSNSEKNANISGLEPDSLDFLIV</sequence>
<evidence type="ECO:0000255" key="1">
    <source>
        <dbReference type="HAMAP-Rule" id="MF_00355"/>
    </source>
</evidence>
<organism>
    <name type="scientific">Pleurastrum terricola</name>
    <name type="common">Filamentous green alga</name>
    <name type="synonym">Leptosira terrestris</name>
    <dbReference type="NCBI Taxonomy" id="34116"/>
    <lineage>
        <taxon>Eukaryota</taxon>
        <taxon>Viridiplantae</taxon>
        <taxon>Chlorophyta</taxon>
        <taxon>core chlorophytes</taxon>
        <taxon>Chlorophyceae</taxon>
        <taxon>CS clade</taxon>
        <taxon>Chlamydomonadales</taxon>
        <taxon>Pleurastraceae</taxon>
        <taxon>Pleurastrum</taxon>
    </lineage>
</organism>
<gene>
    <name evidence="1" type="primary">chlL</name>
</gene>
<name>CHLL_PLETE</name>
<dbReference type="EC" id="1.3.7.7" evidence="1"/>
<dbReference type="EMBL" id="EF506945">
    <property type="protein sequence ID" value="ABO69320.1"/>
    <property type="molecule type" value="Genomic_DNA"/>
</dbReference>
<dbReference type="RefSeq" id="YP_001382181.1">
    <property type="nucleotide sequence ID" value="NC_009681.1"/>
</dbReference>
<dbReference type="SMR" id="A6YGA4"/>
<dbReference type="GeneID" id="5383787"/>
<dbReference type="UniPathway" id="UPA00670"/>
<dbReference type="GO" id="GO:0009507">
    <property type="term" value="C:chloroplast"/>
    <property type="evidence" value="ECO:0007669"/>
    <property type="project" value="UniProtKB-SubCell"/>
</dbReference>
<dbReference type="GO" id="GO:0051539">
    <property type="term" value="F:4 iron, 4 sulfur cluster binding"/>
    <property type="evidence" value="ECO:0007669"/>
    <property type="project" value="UniProtKB-UniRule"/>
</dbReference>
<dbReference type="GO" id="GO:0005524">
    <property type="term" value="F:ATP binding"/>
    <property type="evidence" value="ECO:0007669"/>
    <property type="project" value="UniProtKB-UniRule"/>
</dbReference>
<dbReference type="GO" id="GO:0046872">
    <property type="term" value="F:metal ion binding"/>
    <property type="evidence" value="ECO:0007669"/>
    <property type="project" value="UniProtKB-KW"/>
</dbReference>
<dbReference type="GO" id="GO:0016730">
    <property type="term" value="F:oxidoreductase activity, acting on iron-sulfur proteins as donors"/>
    <property type="evidence" value="ECO:0007669"/>
    <property type="project" value="InterPro"/>
</dbReference>
<dbReference type="GO" id="GO:0016636">
    <property type="term" value="F:oxidoreductase activity, acting on the CH-CH group of donors, iron-sulfur protein as acceptor"/>
    <property type="evidence" value="ECO:0007669"/>
    <property type="project" value="UniProtKB-UniRule"/>
</dbReference>
<dbReference type="GO" id="GO:0036068">
    <property type="term" value="P:light-independent chlorophyll biosynthetic process"/>
    <property type="evidence" value="ECO:0007669"/>
    <property type="project" value="UniProtKB-UniRule"/>
</dbReference>
<dbReference type="GO" id="GO:0019685">
    <property type="term" value="P:photosynthesis, dark reaction"/>
    <property type="evidence" value="ECO:0007669"/>
    <property type="project" value="InterPro"/>
</dbReference>
<dbReference type="CDD" id="cd02032">
    <property type="entry name" value="Bchl-like"/>
    <property type="match status" value="1"/>
</dbReference>
<dbReference type="Gene3D" id="3.40.50.300">
    <property type="entry name" value="P-loop containing nucleotide triphosphate hydrolases"/>
    <property type="match status" value="1"/>
</dbReference>
<dbReference type="HAMAP" id="MF_00355">
    <property type="entry name" value="ChlL_BchL"/>
    <property type="match status" value="1"/>
</dbReference>
<dbReference type="InterPro" id="IPR030655">
    <property type="entry name" value="NifH/chlL_CS"/>
</dbReference>
<dbReference type="InterPro" id="IPR000392">
    <property type="entry name" value="NifH/frxC"/>
</dbReference>
<dbReference type="InterPro" id="IPR027417">
    <property type="entry name" value="P-loop_NTPase"/>
</dbReference>
<dbReference type="InterPro" id="IPR005971">
    <property type="entry name" value="Protochlorophyllide_ATP-bd"/>
</dbReference>
<dbReference type="NCBIfam" id="TIGR01281">
    <property type="entry name" value="DPOR_bchL"/>
    <property type="match status" value="1"/>
</dbReference>
<dbReference type="PANTHER" id="PTHR42864">
    <property type="entry name" value="LIGHT-INDEPENDENT PROTOCHLOROPHYLLIDE REDUCTASE IRON-SULFUR ATP-BINDING PROTEIN"/>
    <property type="match status" value="1"/>
</dbReference>
<dbReference type="PANTHER" id="PTHR42864:SF2">
    <property type="entry name" value="LIGHT-INDEPENDENT PROTOCHLOROPHYLLIDE REDUCTASE IRON-SULFUR ATP-BINDING PROTEIN"/>
    <property type="match status" value="1"/>
</dbReference>
<dbReference type="Pfam" id="PF00142">
    <property type="entry name" value="Fer4_NifH"/>
    <property type="match status" value="1"/>
</dbReference>
<dbReference type="PIRSF" id="PIRSF000363">
    <property type="entry name" value="Nitrogenase_iron"/>
    <property type="match status" value="1"/>
</dbReference>
<dbReference type="PRINTS" id="PR00091">
    <property type="entry name" value="NITROGNASEII"/>
</dbReference>
<dbReference type="SUPFAM" id="SSF52540">
    <property type="entry name" value="P-loop containing nucleoside triphosphate hydrolases"/>
    <property type="match status" value="1"/>
</dbReference>
<dbReference type="PROSITE" id="PS00746">
    <property type="entry name" value="NIFH_FRXC_1"/>
    <property type="match status" value="1"/>
</dbReference>
<dbReference type="PROSITE" id="PS00692">
    <property type="entry name" value="NIFH_FRXC_2"/>
    <property type="match status" value="1"/>
</dbReference>
<dbReference type="PROSITE" id="PS51026">
    <property type="entry name" value="NIFH_FRXC_3"/>
    <property type="match status" value="1"/>
</dbReference>
<proteinExistence type="inferred from homology"/>
<geneLocation type="chloroplast"/>
<keyword id="KW-0004">4Fe-4S</keyword>
<keyword id="KW-0067">ATP-binding</keyword>
<keyword id="KW-0149">Chlorophyll biosynthesis</keyword>
<keyword id="KW-0150">Chloroplast</keyword>
<keyword id="KW-0408">Iron</keyword>
<keyword id="KW-0411">Iron-sulfur</keyword>
<keyword id="KW-0460">Magnesium</keyword>
<keyword id="KW-0479">Metal-binding</keyword>
<keyword id="KW-0547">Nucleotide-binding</keyword>
<keyword id="KW-0560">Oxidoreductase</keyword>
<keyword id="KW-0602">Photosynthesis</keyword>
<keyword id="KW-0934">Plastid</keyword>
<reference key="1">
    <citation type="journal article" date="2007" name="BMC Genomics">
        <title>The chloroplast genome sequence of the green alga Leptosira terrestris: multiple losses of the inverted repeat and extensive genome rearrangements within the Trebouxiophyceae.</title>
        <authorList>
            <person name="de Cambiaire J.-C."/>
            <person name="Otis C."/>
            <person name="Turmel M."/>
            <person name="Lemieux C."/>
        </authorList>
    </citation>
    <scope>NUCLEOTIDE SEQUENCE [LARGE SCALE GENOMIC DNA]</scope>
    <source>
        <strain>CCAP 463/2 / UTEX 333</strain>
    </source>
</reference>
<protein>
    <recommendedName>
        <fullName evidence="1">Light-independent protochlorophyllide reductase iron-sulfur ATP-binding protein</fullName>
        <shortName evidence="1">DPOR subunit L</shortName>
        <shortName evidence="1">LI-POR subunit L</shortName>
        <ecNumber evidence="1">1.3.7.7</ecNumber>
    </recommendedName>
</protein>
<accession>A6YGA4</accession>
<feature type="chain" id="PRO_0000324086" description="Light-independent protochlorophyllide reductase iron-sulfur ATP-binding protein">
    <location>
        <begin position="1"/>
        <end position="294"/>
    </location>
</feature>
<feature type="binding site" evidence="1">
    <location>
        <begin position="10"/>
        <end position="15"/>
    </location>
    <ligand>
        <name>ATP</name>
        <dbReference type="ChEBI" id="CHEBI:30616"/>
    </ligand>
</feature>
<feature type="binding site" evidence="1">
    <location>
        <position position="14"/>
    </location>
    <ligand>
        <name>Mg(2+)</name>
        <dbReference type="ChEBI" id="CHEBI:18420"/>
    </ligand>
</feature>
<feature type="binding site" evidence="1">
    <location>
        <position position="39"/>
    </location>
    <ligand>
        <name>ATP</name>
        <dbReference type="ChEBI" id="CHEBI:30616"/>
    </ligand>
</feature>
<feature type="binding site" evidence="1">
    <location>
        <position position="95"/>
    </location>
    <ligand>
        <name>[4Fe-4S] cluster</name>
        <dbReference type="ChEBI" id="CHEBI:49883"/>
        <note>ligand shared between dimeric partners</note>
    </ligand>
</feature>
<feature type="binding site" evidence="1">
    <location>
        <position position="129"/>
    </location>
    <ligand>
        <name>[4Fe-4S] cluster</name>
        <dbReference type="ChEBI" id="CHEBI:49883"/>
        <note>ligand shared between dimeric partners</note>
    </ligand>
</feature>
<feature type="binding site" evidence="1">
    <location>
        <begin position="180"/>
        <end position="181"/>
    </location>
    <ligand>
        <name>ATP</name>
        <dbReference type="ChEBI" id="CHEBI:30616"/>
    </ligand>
</feature>